<dbReference type="EC" id="6.3.5.3" evidence="1"/>
<dbReference type="EMBL" id="CR936503">
    <property type="protein sequence ID" value="CAI54962.1"/>
    <property type="molecule type" value="Genomic_DNA"/>
</dbReference>
<dbReference type="RefSeq" id="WP_011374367.1">
    <property type="nucleotide sequence ID" value="NC_007576.1"/>
</dbReference>
<dbReference type="SMR" id="Q38XW7"/>
<dbReference type="STRING" id="314315.LCA_0658"/>
<dbReference type="KEGG" id="lsa:LCA_0658"/>
<dbReference type="eggNOG" id="COG0046">
    <property type="taxonomic scope" value="Bacteria"/>
</dbReference>
<dbReference type="HOGENOM" id="CLU_003100_0_1_9"/>
<dbReference type="OrthoDB" id="9804441at2"/>
<dbReference type="UniPathway" id="UPA00074">
    <property type="reaction ID" value="UER00128"/>
</dbReference>
<dbReference type="Proteomes" id="UP000002707">
    <property type="component" value="Chromosome"/>
</dbReference>
<dbReference type="GO" id="GO:0005737">
    <property type="term" value="C:cytoplasm"/>
    <property type="evidence" value="ECO:0007669"/>
    <property type="project" value="UniProtKB-SubCell"/>
</dbReference>
<dbReference type="GO" id="GO:0005524">
    <property type="term" value="F:ATP binding"/>
    <property type="evidence" value="ECO:0007669"/>
    <property type="project" value="UniProtKB-UniRule"/>
</dbReference>
<dbReference type="GO" id="GO:0000287">
    <property type="term" value="F:magnesium ion binding"/>
    <property type="evidence" value="ECO:0007669"/>
    <property type="project" value="UniProtKB-UniRule"/>
</dbReference>
<dbReference type="GO" id="GO:0004642">
    <property type="term" value="F:phosphoribosylformylglycinamidine synthase activity"/>
    <property type="evidence" value="ECO:0007669"/>
    <property type="project" value="UniProtKB-UniRule"/>
</dbReference>
<dbReference type="GO" id="GO:0006189">
    <property type="term" value="P:'de novo' IMP biosynthetic process"/>
    <property type="evidence" value="ECO:0007669"/>
    <property type="project" value="UniProtKB-UniRule"/>
</dbReference>
<dbReference type="CDD" id="cd02203">
    <property type="entry name" value="PurL_repeat1"/>
    <property type="match status" value="1"/>
</dbReference>
<dbReference type="CDD" id="cd02204">
    <property type="entry name" value="PurL_repeat2"/>
    <property type="match status" value="1"/>
</dbReference>
<dbReference type="FunFam" id="3.30.1330.10:FF:000004">
    <property type="entry name" value="Phosphoribosylformylglycinamidine synthase subunit PurL"/>
    <property type="match status" value="1"/>
</dbReference>
<dbReference type="Gene3D" id="3.90.650.10">
    <property type="entry name" value="PurM-like C-terminal domain"/>
    <property type="match status" value="2"/>
</dbReference>
<dbReference type="Gene3D" id="3.30.1330.10">
    <property type="entry name" value="PurM-like, N-terminal domain"/>
    <property type="match status" value="2"/>
</dbReference>
<dbReference type="HAMAP" id="MF_00420">
    <property type="entry name" value="PurL_2"/>
    <property type="match status" value="1"/>
</dbReference>
<dbReference type="InterPro" id="IPR010074">
    <property type="entry name" value="PRibForGlyAmidine_synth_PurL"/>
</dbReference>
<dbReference type="InterPro" id="IPR041609">
    <property type="entry name" value="PurL_linker"/>
</dbReference>
<dbReference type="InterPro" id="IPR010918">
    <property type="entry name" value="PurM-like_C_dom"/>
</dbReference>
<dbReference type="InterPro" id="IPR036676">
    <property type="entry name" value="PurM-like_C_sf"/>
</dbReference>
<dbReference type="InterPro" id="IPR016188">
    <property type="entry name" value="PurM-like_N"/>
</dbReference>
<dbReference type="InterPro" id="IPR036921">
    <property type="entry name" value="PurM-like_N_sf"/>
</dbReference>
<dbReference type="NCBIfam" id="TIGR01736">
    <property type="entry name" value="FGAM_synth_II"/>
    <property type="match status" value="1"/>
</dbReference>
<dbReference type="NCBIfam" id="NF002290">
    <property type="entry name" value="PRK01213.1"/>
    <property type="match status" value="1"/>
</dbReference>
<dbReference type="PANTHER" id="PTHR43555">
    <property type="entry name" value="PHOSPHORIBOSYLFORMYLGLYCINAMIDINE SYNTHASE SUBUNIT PURL"/>
    <property type="match status" value="1"/>
</dbReference>
<dbReference type="PANTHER" id="PTHR43555:SF1">
    <property type="entry name" value="PHOSPHORIBOSYLFORMYLGLYCINAMIDINE SYNTHASE SUBUNIT PURL"/>
    <property type="match status" value="1"/>
</dbReference>
<dbReference type="Pfam" id="PF00586">
    <property type="entry name" value="AIRS"/>
    <property type="match status" value="2"/>
</dbReference>
<dbReference type="Pfam" id="PF02769">
    <property type="entry name" value="AIRS_C"/>
    <property type="match status" value="2"/>
</dbReference>
<dbReference type="Pfam" id="PF18072">
    <property type="entry name" value="FGAR-AT_linker"/>
    <property type="match status" value="1"/>
</dbReference>
<dbReference type="PIRSF" id="PIRSF001587">
    <property type="entry name" value="FGAM_synthase_II"/>
    <property type="match status" value="1"/>
</dbReference>
<dbReference type="SUPFAM" id="SSF56042">
    <property type="entry name" value="PurM C-terminal domain-like"/>
    <property type="match status" value="2"/>
</dbReference>
<dbReference type="SUPFAM" id="SSF55326">
    <property type="entry name" value="PurM N-terminal domain-like"/>
    <property type="match status" value="2"/>
</dbReference>
<proteinExistence type="inferred from homology"/>
<evidence type="ECO:0000255" key="1">
    <source>
        <dbReference type="HAMAP-Rule" id="MF_00420"/>
    </source>
</evidence>
<keyword id="KW-0067">ATP-binding</keyword>
<keyword id="KW-0963">Cytoplasm</keyword>
<keyword id="KW-0436">Ligase</keyword>
<keyword id="KW-0460">Magnesium</keyword>
<keyword id="KW-0479">Metal-binding</keyword>
<keyword id="KW-0547">Nucleotide-binding</keyword>
<keyword id="KW-0658">Purine biosynthesis</keyword>
<keyword id="KW-1185">Reference proteome</keyword>
<protein>
    <recommendedName>
        <fullName evidence="1">Phosphoribosylformylglycinamidine synthase subunit PurL</fullName>
        <shortName evidence="1">FGAM synthase</shortName>
        <ecNumber evidence="1">6.3.5.3</ecNumber>
    </recommendedName>
    <alternativeName>
        <fullName evidence="1">Formylglycinamide ribonucleotide amidotransferase subunit II</fullName>
        <shortName evidence="1">FGAR amidotransferase II</shortName>
        <shortName evidence="1">FGAR-AT II</shortName>
    </alternativeName>
    <alternativeName>
        <fullName evidence="1">Glutamine amidotransferase PurL</fullName>
    </alternativeName>
    <alternativeName>
        <fullName evidence="1">Phosphoribosylformylglycinamidine synthase subunit II</fullName>
    </alternativeName>
</protein>
<reference key="1">
    <citation type="journal article" date="2005" name="Nat. Biotechnol.">
        <title>The complete genome sequence of the meat-borne lactic acid bacterium Lactobacillus sakei 23K.</title>
        <authorList>
            <person name="Chaillou S."/>
            <person name="Champomier-Verges M.-C."/>
            <person name="Cornet M."/>
            <person name="Crutz-Le Coq A.-M."/>
            <person name="Dudez A.-M."/>
            <person name="Martin V."/>
            <person name="Beaufils S."/>
            <person name="Darbon-Rongere E."/>
            <person name="Bossy R."/>
            <person name="Loux V."/>
            <person name="Zagorec M."/>
        </authorList>
    </citation>
    <scope>NUCLEOTIDE SEQUENCE [LARGE SCALE GENOMIC DNA]</scope>
    <source>
        <strain>23K</strain>
    </source>
</reference>
<gene>
    <name evidence="1" type="primary">purL</name>
    <name type="ordered locus">LCA_0658</name>
</gene>
<comment type="function">
    <text evidence="1">Part of the phosphoribosylformylglycinamidine synthase complex involved in the purines biosynthetic pathway. Catalyzes the ATP-dependent conversion of formylglycinamide ribonucleotide (FGAR) and glutamine to yield formylglycinamidine ribonucleotide (FGAM) and glutamate. The FGAM synthase complex is composed of three subunits. PurQ produces an ammonia molecule by converting glutamine to glutamate. PurL transfers the ammonia molecule to FGAR to form FGAM in an ATP-dependent manner. PurS interacts with PurQ and PurL and is thought to assist in the transfer of the ammonia molecule from PurQ to PurL.</text>
</comment>
<comment type="catalytic activity">
    <reaction evidence="1">
        <text>N(2)-formyl-N(1)-(5-phospho-beta-D-ribosyl)glycinamide + L-glutamine + ATP + H2O = 2-formamido-N(1)-(5-O-phospho-beta-D-ribosyl)acetamidine + L-glutamate + ADP + phosphate + H(+)</text>
        <dbReference type="Rhea" id="RHEA:17129"/>
        <dbReference type="ChEBI" id="CHEBI:15377"/>
        <dbReference type="ChEBI" id="CHEBI:15378"/>
        <dbReference type="ChEBI" id="CHEBI:29985"/>
        <dbReference type="ChEBI" id="CHEBI:30616"/>
        <dbReference type="ChEBI" id="CHEBI:43474"/>
        <dbReference type="ChEBI" id="CHEBI:58359"/>
        <dbReference type="ChEBI" id="CHEBI:147286"/>
        <dbReference type="ChEBI" id="CHEBI:147287"/>
        <dbReference type="ChEBI" id="CHEBI:456216"/>
        <dbReference type="EC" id="6.3.5.3"/>
    </reaction>
</comment>
<comment type="pathway">
    <text evidence="1">Purine metabolism; IMP biosynthesis via de novo pathway; 5-amino-1-(5-phospho-D-ribosyl)imidazole from N(2)-formyl-N(1)-(5-phospho-D-ribosyl)glycinamide: step 1/2.</text>
</comment>
<comment type="subunit">
    <text evidence="1">Monomer. Part of the FGAM synthase complex composed of 1 PurL, 1 PurQ and 2 PurS subunits.</text>
</comment>
<comment type="subcellular location">
    <subcellularLocation>
        <location evidence="1">Cytoplasm</location>
    </subcellularLocation>
</comment>
<comment type="similarity">
    <text evidence="1">Belongs to the FGAMS family.</text>
</comment>
<name>PURL_LATSS</name>
<sequence length="741" mass="79970">MVNNPTAIEIQQTKLYQQWGLTDSEYELICTKILKRLPNYTETGLFSVMWSEHCSYKNSKPILKKFPTNGPHVLQGPGEGAGILDIGDGQAVVFKAESHNHPSAVEPYEGAATGVGGIIRDIFSMGATPIAILDSLRFGELNDNQTKYLVQEVVAGIGGYGNCIGIPTVGGEISFDPCYQANPLVNAMCVGLIEQKDIQQGKARGAGNSVLYVGAKTGRDGIHGATFASDEFAEGKATQRSAVQVGDPFMEKLLMDACLELILQHSDWLVGIQDMGAAGLVSSTAEMAAKAGTGMILDLDQVPQRETDMSAYEIMLSESQERMALCVRAGYEDQVIALFKGYDLDAVRIGEVTTKEQYQLWHQGQLVADLPVAALTDAAPVYHKDQAKPERLATFAAQAPYVPSVTDTQATWLALLKQPTIADKSSFYRHYDAQVKTNTVVLPGSDAAVVRIRGTKKALAMTTDCNGRYLYLDPHVGGQIAVAEAARNIVAAGGQPLGITDCLNYGNPEKPAVFWEFDQSAQGIAAACETFGTPVISGNVSLYNEFNGEAIYPTPMIGMVGLIRDIQDITTQDFKQVDDLIYLIGETDDNYAGSELQKMQQGTISDQLGHFSLATEKANQDLVLKAIQQGLITSAHDLSEGGLAVALSEATFKQGLGYHVQVDLASRQLFAETQSRFIVTVKAANQAAFEQISDQSAQLIGRVTAEPIMHIQTKDEMIDLTVEAAKDAWEAALPCLMKSEA</sequence>
<feature type="chain" id="PRO_0000236654" description="Phosphoribosylformylglycinamidine synthase subunit PurL">
    <location>
        <begin position="1"/>
        <end position="741"/>
    </location>
</feature>
<feature type="active site" evidence="1">
    <location>
        <position position="53"/>
    </location>
</feature>
<feature type="active site" description="Proton acceptor" evidence="1">
    <location>
        <position position="99"/>
    </location>
</feature>
<feature type="binding site" evidence="1">
    <location>
        <position position="56"/>
    </location>
    <ligand>
        <name>ATP</name>
        <dbReference type="ChEBI" id="CHEBI:30616"/>
    </ligand>
</feature>
<feature type="binding site" evidence="1">
    <location>
        <position position="95"/>
    </location>
    <ligand>
        <name>ATP</name>
        <dbReference type="ChEBI" id="CHEBI:30616"/>
    </ligand>
</feature>
<feature type="binding site" evidence="1">
    <location>
        <position position="97"/>
    </location>
    <ligand>
        <name>Mg(2+)</name>
        <dbReference type="ChEBI" id="CHEBI:18420"/>
        <label>1</label>
    </ligand>
</feature>
<feature type="binding site" evidence="1">
    <location>
        <begin position="98"/>
        <end position="101"/>
    </location>
    <ligand>
        <name>substrate</name>
    </ligand>
</feature>
<feature type="binding site" evidence="1">
    <location>
        <position position="120"/>
    </location>
    <ligand>
        <name>substrate</name>
    </ligand>
</feature>
<feature type="binding site" evidence="1">
    <location>
        <position position="121"/>
    </location>
    <ligand>
        <name>Mg(2+)</name>
        <dbReference type="ChEBI" id="CHEBI:18420"/>
        <label>2</label>
    </ligand>
</feature>
<feature type="binding site" evidence="1">
    <location>
        <position position="244"/>
    </location>
    <ligand>
        <name>substrate</name>
    </ligand>
</feature>
<feature type="binding site" evidence="1">
    <location>
        <position position="274"/>
    </location>
    <ligand>
        <name>Mg(2+)</name>
        <dbReference type="ChEBI" id="CHEBI:18420"/>
        <label>2</label>
    </ligand>
</feature>
<feature type="binding site" evidence="1">
    <location>
        <begin position="318"/>
        <end position="320"/>
    </location>
    <ligand>
        <name>substrate</name>
    </ligand>
</feature>
<feature type="binding site" evidence="1">
    <location>
        <position position="501"/>
    </location>
    <ligand>
        <name>ATP</name>
        <dbReference type="ChEBI" id="CHEBI:30616"/>
    </ligand>
</feature>
<feature type="binding site" evidence="1">
    <location>
        <position position="538"/>
    </location>
    <ligand>
        <name>ATP</name>
        <dbReference type="ChEBI" id="CHEBI:30616"/>
    </ligand>
</feature>
<feature type="binding site" evidence="1">
    <location>
        <position position="539"/>
    </location>
    <ligand>
        <name>Mg(2+)</name>
        <dbReference type="ChEBI" id="CHEBI:18420"/>
        <label>1</label>
    </ligand>
</feature>
<feature type="binding site" evidence="1">
    <location>
        <position position="541"/>
    </location>
    <ligand>
        <name>substrate</name>
    </ligand>
</feature>
<organism>
    <name type="scientific">Latilactobacillus sakei subsp. sakei (strain 23K)</name>
    <name type="common">Lactobacillus sakei subsp. sakei</name>
    <dbReference type="NCBI Taxonomy" id="314315"/>
    <lineage>
        <taxon>Bacteria</taxon>
        <taxon>Bacillati</taxon>
        <taxon>Bacillota</taxon>
        <taxon>Bacilli</taxon>
        <taxon>Lactobacillales</taxon>
        <taxon>Lactobacillaceae</taxon>
        <taxon>Latilactobacillus</taxon>
    </lineage>
</organism>
<accession>Q38XW7</accession>